<feature type="chain" id="PRO_1000085935" description="Small ribosomal subunit protein uS8">
    <location>
        <begin position="1"/>
        <end position="130"/>
    </location>
</feature>
<evidence type="ECO:0000255" key="1">
    <source>
        <dbReference type="HAMAP-Rule" id="MF_01302"/>
    </source>
</evidence>
<evidence type="ECO:0000305" key="2"/>
<sequence length="130" mass="13975">MSMQDPLADMLTRIRNAQMAEKSVVSMPSSTLKVAVAKVLKDEGYIAGYQVTGEAKPSLSIELKYFEGRPVIEELKRSSRPGLRQYKAVTDLPKVRGGLGVSIVSTNKGVMTDRAARAAGVGGEVLCTVF</sequence>
<reference key="1">
    <citation type="submission" date="2008-01" db="EMBL/GenBank/DDBJ databases">
        <title>Complete sequence of Pseudomonas putida GB-1.</title>
        <authorList>
            <consortium name="US DOE Joint Genome Institute"/>
            <person name="Copeland A."/>
            <person name="Lucas S."/>
            <person name="Lapidus A."/>
            <person name="Barry K."/>
            <person name="Glavina del Rio T."/>
            <person name="Dalin E."/>
            <person name="Tice H."/>
            <person name="Pitluck S."/>
            <person name="Bruce D."/>
            <person name="Goodwin L."/>
            <person name="Chertkov O."/>
            <person name="Brettin T."/>
            <person name="Detter J.C."/>
            <person name="Han C."/>
            <person name="Kuske C.R."/>
            <person name="Schmutz J."/>
            <person name="Larimer F."/>
            <person name="Land M."/>
            <person name="Hauser L."/>
            <person name="Kyrpides N."/>
            <person name="Kim E."/>
            <person name="McCarthy J.K."/>
            <person name="Richardson P."/>
        </authorList>
    </citation>
    <scope>NUCLEOTIDE SEQUENCE [LARGE SCALE GENOMIC DNA]</scope>
    <source>
        <strain>GB-1</strain>
    </source>
</reference>
<accession>B0KK81</accession>
<comment type="function">
    <text evidence="1">One of the primary rRNA binding proteins, it binds directly to 16S rRNA central domain where it helps coordinate assembly of the platform of the 30S subunit.</text>
</comment>
<comment type="subunit">
    <text evidence="1">Part of the 30S ribosomal subunit. Contacts proteins S5 and S12.</text>
</comment>
<comment type="similarity">
    <text evidence="1">Belongs to the universal ribosomal protein uS8 family.</text>
</comment>
<gene>
    <name evidence="1" type="primary">rpsH</name>
    <name type="ordered locus">PputGB1_0498</name>
</gene>
<organism>
    <name type="scientific">Pseudomonas putida (strain GB-1)</name>
    <dbReference type="NCBI Taxonomy" id="76869"/>
    <lineage>
        <taxon>Bacteria</taxon>
        <taxon>Pseudomonadati</taxon>
        <taxon>Pseudomonadota</taxon>
        <taxon>Gammaproteobacteria</taxon>
        <taxon>Pseudomonadales</taxon>
        <taxon>Pseudomonadaceae</taxon>
        <taxon>Pseudomonas</taxon>
    </lineage>
</organism>
<protein>
    <recommendedName>
        <fullName evidence="1">Small ribosomal subunit protein uS8</fullName>
    </recommendedName>
    <alternativeName>
        <fullName evidence="2">30S ribosomal protein S8</fullName>
    </alternativeName>
</protein>
<dbReference type="EMBL" id="CP000926">
    <property type="protein sequence ID" value="ABY96409.1"/>
    <property type="molecule type" value="Genomic_DNA"/>
</dbReference>
<dbReference type="RefSeq" id="WP_003255471.1">
    <property type="nucleotide sequence ID" value="NC_010322.1"/>
</dbReference>
<dbReference type="SMR" id="B0KK81"/>
<dbReference type="GeneID" id="83677766"/>
<dbReference type="KEGG" id="ppg:PputGB1_0498"/>
<dbReference type="eggNOG" id="COG0096">
    <property type="taxonomic scope" value="Bacteria"/>
</dbReference>
<dbReference type="HOGENOM" id="CLU_098428_0_0_6"/>
<dbReference type="Proteomes" id="UP000002157">
    <property type="component" value="Chromosome"/>
</dbReference>
<dbReference type="GO" id="GO:1990904">
    <property type="term" value="C:ribonucleoprotein complex"/>
    <property type="evidence" value="ECO:0007669"/>
    <property type="project" value="UniProtKB-KW"/>
</dbReference>
<dbReference type="GO" id="GO:0005840">
    <property type="term" value="C:ribosome"/>
    <property type="evidence" value="ECO:0007669"/>
    <property type="project" value="UniProtKB-KW"/>
</dbReference>
<dbReference type="GO" id="GO:0019843">
    <property type="term" value="F:rRNA binding"/>
    <property type="evidence" value="ECO:0007669"/>
    <property type="project" value="UniProtKB-UniRule"/>
</dbReference>
<dbReference type="GO" id="GO:0003735">
    <property type="term" value="F:structural constituent of ribosome"/>
    <property type="evidence" value="ECO:0007669"/>
    <property type="project" value="InterPro"/>
</dbReference>
<dbReference type="GO" id="GO:0006412">
    <property type="term" value="P:translation"/>
    <property type="evidence" value="ECO:0007669"/>
    <property type="project" value="UniProtKB-UniRule"/>
</dbReference>
<dbReference type="FunFam" id="3.30.1370.30:FF:000003">
    <property type="entry name" value="30S ribosomal protein S8"/>
    <property type="match status" value="1"/>
</dbReference>
<dbReference type="FunFam" id="3.30.1490.10:FF:000001">
    <property type="entry name" value="30S ribosomal protein S8"/>
    <property type="match status" value="1"/>
</dbReference>
<dbReference type="Gene3D" id="3.30.1370.30">
    <property type="match status" value="1"/>
</dbReference>
<dbReference type="Gene3D" id="3.30.1490.10">
    <property type="match status" value="1"/>
</dbReference>
<dbReference type="HAMAP" id="MF_01302_B">
    <property type="entry name" value="Ribosomal_uS8_B"/>
    <property type="match status" value="1"/>
</dbReference>
<dbReference type="InterPro" id="IPR000630">
    <property type="entry name" value="Ribosomal_uS8"/>
</dbReference>
<dbReference type="InterPro" id="IPR047863">
    <property type="entry name" value="Ribosomal_uS8_CS"/>
</dbReference>
<dbReference type="InterPro" id="IPR035987">
    <property type="entry name" value="Ribosomal_uS8_sf"/>
</dbReference>
<dbReference type="NCBIfam" id="NF001109">
    <property type="entry name" value="PRK00136.1"/>
    <property type="match status" value="1"/>
</dbReference>
<dbReference type="PANTHER" id="PTHR11758">
    <property type="entry name" value="40S RIBOSOMAL PROTEIN S15A"/>
    <property type="match status" value="1"/>
</dbReference>
<dbReference type="Pfam" id="PF00410">
    <property type="entry name" value="Ribosomal_S8"/>
    <property type="match status" value="1"/>
</dbReference>
<dbReference type="SUPFAM" id="SSF56047">
    <property type="entry name" value="Ribosomal protein S8"/>
    <property type="match status" value="1"/>
</dbReference>
<dbReference type="PROSITE" id="PS00053">
    <property type="entry name" value="RIBOSOMAL_S8"/>
    <property type="match status" value="1"/>
</dbReference>
<proteinExistence type="inferred from homology"/>
<keyword id="KW-0687">Ribonucleoprotein</keyword>
<keyword id="KW-0689">Ribosomal protein</keyword>
<keyword id="KW-0694">RNA-binding</keyword>
<keyword id="KW-0699">rRNA-binding</keyword>
<name>RS8_PSEPG</name>